<proteinExistence type="evidence at protein level"/>
<protein>
    <recommendedName>
        <fullName evidence="1">Cilia- and flagella-associated protein 141</fullName>
    </recommendedName>
</protein>
<feature type="chain" id="PRO_0000270965" description="Cilia- and flagella-associated protein 141">
    <location>
        <begin position="1"/>
        <end position="101"/>
    </location>
</feature>
<name>CP141_BOVIN</name>
<organism>
    <name type="scientific">Bos taurus</name>
    <name type="common">Bovine</name>
    <dbReference type="NCBI Taxonomy" id="9913"/>
    <lineage>
        <taxon>Eukaryota</taxon>
        <taxon>Metazoa</taxon>
        <taxon>Chordata</taxon>
        <taxon>Craniata</taxon>
        <taxon>Vertebrata</taxon>
        <taxon>Euteleostomi</taxon>
        <taxon>Mammalia</taxon>
        <taxon>Eutheria</taxon>
        <taxon>Laurasiatheria</taxon>
        <taxon>Artiodactyla</taxon>
        <taxon>Ruminantia</taxon>
        <taxon>Pecora</taxon>
        <taxon>Bovidae</taxon>
        <taxon>Bovinae</taxon>
        <taxon>Bos</taxon>
    </lineage>
</organism>
<dbReference type="EMBL" id="BC109726">
    <property type="protein sequence ID" value="AAI09727.1"/>
    <property type="molecule type" value="mRNA"/>
</dbReference>
<dbReference type="RefSeq" id="NP_001033115.1">
    <property type="nucleotide sequence ID" value="NM_001038026.2"/>
</dbReference>
<dbReference type="PDB" id="7RRO">
    <property type="method" value="EM"/>
    <property type="resolution" value="3.40 A"/>
    <property type="chains" value="C=1-101"/>
</dbReference>
<dbReference type="PDB" id="8OTZ">
    <property type="method" value="EM"/>
    <property type="resolution" value="3.60 A"/>
    <property type="chains" value="h=1-101"/>
</dbReference>
<dbReference type="PDB" id="9CPB">
    <property type="method" value="EM"/>
    <property type="resolution" value="3.52 A"/>
    <property type="chains" value="1R=1-101"/>
</dbReference>
<dbReference type="PDBsum" id="7RRO"/>
<dbReference type="PDBsum" id="8OTZ"/>
<dbReference type="PDBsum" id="9CPB"/>
<dbReference type="EMDB" id="EMD-17187"/>
<dbReference type="EMDB" id="EMD-24664"/>
<dbReference type="EMDB" id="EMD-45801"/>
<dbReference type="EMDB" id="EMD-50664"/>
<dbReference type="SMR" id="Q32L75"/>
<dbReference type="FunCoup" id="Q32L75">
    <property type="interactions" value="60"/>
</dbReference>
<dbReference type="STRING" id="9913.ENSBTAP00000044427"/>
<dbReference type="PaxDb" id="9913-ENSBTAP00000044427"/>
<dbReference type="Ensembl" id="ENSBTAT00000047205.2">
    <property type="protein sequence ID" value="ENSBTAP00000044427.1"/>
    <property type="gene ID" value="ENSBTAG00000033220.2"/>
</dbReference>
<dbReference type="GeneID" id="504348"/>
<dbReference type="KEGG" id="bta:504348"/>
<dbReference type="CTD" id="388701"/>
<dbReference type="VEuPathDB" id="HostDB:ENSBTAG00000033220"/>
<dbReference type="VGNC" id="VGNC:52709">
    <property type="gene designation" value="CFAP141"/>
</dbReference>
<dbReference type="eggNOG" id="ENOG502SF03">
    <property type="taxonomic scope" value="Eukaryota"/>
</dbReference>
<dbReference type="GeneTree" id="ENSGT00510000048901"/>
<dbReference type="HOGENOM" id="CLU_2290739_0_0_1"/>
<dbReference type="InParanoid" id="Q32L75"/>
<dbReference type="OMA" id="WRNAHTD"/>
<dbReference type="OrthoDB" id="2122938at2759"/>
<dbReference type="TreeFam" id="TF341125"/>
<dbReference type="Proteomes" id="UP000009136">
    <property type="component" value="Chromosome 3"/>
</dbReference>
<dbReference type="Bgee" id="ENSBTAG00000033220">
    <property type="expression patterns" value="Expressed in semen and 94 other cell types or tissues"/>
</dbReference>
<dbReference type="GO" id="GO:0160111">
    <property type="term" value="C:axonemal A tubule inner sheath"/>
    <property type="evidence" value="ECO:0000250"/>
    <property type="project" value="UniProtKB"/>
</dbReference>
<dbReference type="GO" id="GO:0005879">
    <property type="term" value="C:axonemal microtubule"/>
    <property type="evidence" value="ECO:0000314"/>
    <property type="project" value="UniProtKB"/>
</dbReference>
<dbReference type="GO" id="GO:0036126">
    <property type="term" value="C:sperm flagellum"/>
    <property type="evidence" value="ECO:0000250"/>
    <property type="project" value="UniProtKB"/>
</dbReference>
<dbReference type="GO" id="GO:0030317">
    <property type="term" value="P:flagellated sperm motility"/>
    <property type="evidence" value="ECO:0000250"/>
    <property type="project" value="UniProtKB"/>
</dbReference>
<dbReference type="InterPro" id="IPR029375">
    <property type="entry name" value="CFAP141"/>
</dbReference>
<dbReference type="PANTHER" id="PTHR35818">
    <property type="entry name" value="C1ORF189"/>
    <property type="match status" value="1"/>
</dbReference>
<dbReference type="PANTHER" id="PTHR35818:SF1">
    <property type="entry name" value="CILIA- AND FLAGELLA-ASSOCIATED PROTEIN 141"/>
    <property type="match status" value="1"/>
</dbReference>
<dbReference type="Pfam" id="PF15104">
    <property type="entry name" value="CFAP141"/>
    <property type="match status" value="1"/>
</dbReference>
<evidence type="ECO:0000250" key="1">
    <source>
        <dbReference type="UniProtKB" id="Q5VU69"/>
    </source>
</evidence>
<evidence type="ECO:0000269" key="2">
    <source>
    </source>
</evidence>
<evidence type="ECO:0000269" key="3">
    <source>
    </source>
</evidence>
<evidence type="ECO:0007744" key="4">
    <source>
        <dbReference type="PDB" id="7RRO"/>
    </source>
</evidence>
<evidence type="ECO:0007744" key="5">
    <source>
        <dbReference type="PDB" id="8OTZ"/>
    </source>
</evidence>
<gene>
    <name evidence="1" type="primary">CFAP141</name>
</gene>
<reference key="1">
    <citation type="submission" date="2005-11" db="EMBL/GenBank/DDBJ databases">
        <authorList>
            <consortium name="NIH - Mammalian Gene Collection (MGC) project"/>
        </authorList>
    </citation>
    <scope>NUCLEOTIDE SEQUENCE [LARGE SCALE MRNA]</scope>
    <source>
        <strain>Crossbred X Angus</strain>
        <tissue>Liver</tissue>
    </source>
</reference>
<reference evidence="4" key="2">
    <citation type="journal article" date="2021" name="Cell">
        <title>De novo identification of mammalian ciliary motility proteins using cryo-EM.</title>
        <authorList>
            <person name="Gui M."/>
            <person name="Farley H."/>
            <person name="Anujan P."/>
            <person name="Anderson J.R."/>
            <person name="Maxwell D.W."/>
            <person name="Whitchurch J.B."/>
            <person name="Botsch J.J."/>
            <person name="Qiu T."/>
            <person name="Meleppattu S."/>
            <person name="Singh S.K."/>
            <person name="Zhang Q."/>
            <person name="Thompson J."/>
            <person name="Lucas J.S."/>
            <person name="Bingle C.D."/>
            <person name="Norris D.P."/>
            <person name="Roy S."/>
            <person name="Brown A."/>
        </authorList>
    </citation>
    <scope>STRUCTURE BY ELECTRON MICROSCOPY (3.40 ANGSTROMS)</scope>
    <scope>FUNCTION</scope>
    <scope>SUBCELLULAR LOCATION</scope>
    <scope>TISSUE SPECIFICITY</scope>
</reference>
<reference evidence="5" key="3">
    <citation type="journal article" date="2023" name="Cell">
        <title>Structural specializations of the sperm tail.</title>
        <authorList>
            <person name="Leung M.R."/>
            <person name="Zeng J."/>
            <person name="Wang X."/>
            <person name="Roelofs M.C."/>
            <person name="Huang W."/>
            <person name="Zenezini Chiozzi R."/>
            <person name="Hevler J.F."/>
            <person name="Heck A.J.R."/>
            <person name="Dutcher S.K."/>
            <person name="Brown A."/>
            <person name="Zhang R."/>
            <person name="Zeev-Ben-Mordehai T."/>
        </authorList>
    </citation>
    <scope>STRUCTURE BY ELECTRON MICROSCOPY (3.60 ANGSTROMS)</scope>
    <scope>FUNCTION</scope>
    <scope>SUBUNIT</scope>
    <scope>SUBCELLULAR LOCATION</scope>
</reference>
<comment type="function">
    <text evidence="2 3">Microtubule inner protein (MIP) part of the dynein-decorated doublet microtubules (DMTs) in cilia axoneme, which is required for motile cilia beating.</text>
</comment>
<comment type="subunit">
    <text evidence="3">Microtubule inner protein component of sperm flagellar doublet microtubules.</text>
</comment>
<comment type="subcellular location">
    <subcellularLocation>
        <location evidence="2">Cytoplasm</location>
        <location evidence="2">Cytoskeleton</location>
        <location evidence="2">Cilium axoneme</location>
    </subcellularLocation>
    <subcellularLocation>
        <location evidence="3">Cytoplasm</location>
        <location evidence="3">Cytoskeleton</location>
        <location evidence="3">Flagellum axoneme</location>
    </subcellularLocation>
</comment>
<comment type="tissue specificity">
    <text evidence="2">Expressed in trachea multiciliated cells.</text>
</comment>
<keyword id="KW-0002">3D-structure</keyword>
<keyword id="KW-0966">Cell projection</keyword>
<keyword id="KW-0969">Cilium</keyword>
<keyword id="KW-0963">Cytoplasm</keyword>
<keyword id="KW-0206">Cytoskeleton</keyword>
<keyword id="KW-0282">Flagellum</keyword>
<keyword id="KW-1185">Reference proteome</keyword>
<accession>Q32L75</accession>
<sequence>MSMEKMGKVEEHFQRALELKKMVHRWRNSHTHCLWQITLSQRRNPYAILRMQDTMVQELALANKQLLMVRQAALHQLFEKEHQQYQQELNEKGKAFYMERL</sequence>